<gene>
    <name type="ordered locus">Ccon26_10310</name>
    <name type="ORF">CCC13826_0355</name>
</gene>
<name>NIKR_CAMC1</name>
<comment type="function">
    <text evidence="1">Transcriptional regulator.</text>
</comment>
<comment type="cofactor">
    <cofactor evidence="1">
        <name>Ni(2+)</name>
        <dbReference type="ChEBI" id="CHEBI:49786"/>
    </cofactor>
    <text evidence="1">Binds 1 nickel ion per subunit.</text>
</comment>
<comment type="similarity">
    <text evidence="1">Belongs to the transcriptional regulatory CopG/NikR family.</text>
</comment>
<protein>
    <recommendedName>
        <fullName evidence="1">Putative nickel-responsive regulator</fullName>
    </recommendedName>
</protein>
<dbReference type="EMBL" id="CP000792">
    <property type="protein sequence ID" value="EAT97226.2"/>
    <property type="molecule type" value="Genomic_DNA"/>
</dbReference>
<dbReference type="SMR" id="A7ZDN6"/>
<dbReference type="STRING" id="360104.CCC13826_0355"/>
<dbReference type="KEGG" id="cco:CCC13826_0355"/>
<dbReference type="eggNOG" id="COG0864">
    <property type="taxonomic scope" value="Bacteria"/>
</dbReference>
<dbReference type="HOGENOM" id="CLU_113319_1_2_7"/>
<dbReference type="OrthoDB" id="9806294at2"/>
<dbReference type="Proteomes" id="UP000001121">
    <property type="component" value="Chromosome"/>
</dbReference>
<dbReference type="GO" id="GO:0003677">
    <property type="term" value="F:DNA binding"/>
    <property type="evidence" value="ECO:0007669"/>
    <property type="project" value="UniProtKB-KW"/>
</dbReference>
<dbReference type="GO" id="GO:0003700">
    <property type="term" value="F:DNA-binding transcription factor activity"/>
    <property type="evidence" value="ECO:0007669"/>
    <property type="project" value="UniProtKB-UniRule"/>
</dbReference>
<dbReference type="GO" id="GO:0016151">
    <property type="term" value="F:nickel cation binding"/>
    <property type="evidence" value="ECO:0007669"/>
    <property type="project" value="UniProtKB-UniRule"/>
</dbReference>
<dbReference type="GO" id="GO:0010045">
    <property type="term" value="P:response to nickel cation"/>
    <property type="evidence" value="ECO:0007669"/>
    <property type="project" value="InterPro"/>
</dbReference>
<dbReference type="CDD" id="cd22231">
    <property type="entry name" value="RHH_NikR_HicB-like"/>
    <property type="match status" value="1"/>
</dbReference>
<dbReference type="Gene3D" id="3.30.70.1150">
    <property type="entry name" value="ACT-like. Chain A, domain 2"/>
    <property type="match status" value="1"/>
</dbReference>
<dbReference type="Gene3D" id="1.10.1220.10">
    <property type="entry name" value="Met repressor-like"/>
    <property type="match status" value="1"/>
</dbReference>
<dbReference type="HAMAP" id="MF_00476">
    <property type="entry name" value="NikR"/>
    <property type="match status" value="1"/>
</dbReference>
<dbReference type="InterPro" id="IPR027271">
    <property type="entry name" value="Acetolactate_synth/TF_NikR_C"/>
</dbReference>
<dbReference type="InterPro" id="IPR045865">
    <property type="entry name" value="ACT-like_dom_sf"/>
</dbReference>
<dbReference type="InterPro" id="IPR013321">
    <property type="entry name" value="Arc_rbn_hlx_hlx"/>
</dbReference>
<dbReference type="InterPro" id="IPR002145">
    <property type="entry name" value="CopG"/>
</dbReference>
<dbReference type="InterPro" id="IPR050192">
    <property type="entry name" value="CopG/NikR_regulator"/>
</dbReference>
<dbReference type="InterPro" id="IPR022988">
    <property type="entry name" value="Ni_resp_reg_NikR"/>
</dbReference>
<dbReference type="InterPro" id="IPR010985">
    <property type="entry name" value="Ribbon_hlx_hlx"/>
</dbReference>
<dbReference type="InterPro" id="IPR014864">
    <property type="entry name" value="TF_NikR_Ni-bd_C"/>
</dbReference>
<dbReference type="NCBIfam" id="NF001884">
    <property type="entry name" value="PRK00630.1"/>
    <property type="match status" value="1"/>
</dbReference>
<dbReference type="NCBIfam" id="NF002169">
    <property type="entry name" value="PRK01002.1"/>
    <property type="match status" value="1"/>
</dbReference>
<dbReference type="NCBIfam" id="NF002815">
    <property type="entry name" value="PRK02967.1"/>
    <property type="match status" value="1"/>
</dbReference>
<dbReference type="NCBIfam" id="NF003381">
    <property type="entry name" value="PRK04460.1"/>
    <property type="match status" value="1"/>
</dbReference>
<dbReference type="PANTHER" id="PTHR34719">
    <property type="entry name" value="NICKEL-RESPONSIVE REGULATOR"/>
    <property type="match status" value="1"/>
</dbReference>
<dbReference type="PANTHER" id="PTHR34719:SF2">
    <property type="entry name" value="NICKEL-RESPONSIVE REGULATOR"/>
    <property type="match status" value="1"/>
</dbReference>
<dbReference type="Pfam" id="PF08753">
    <property type="entry name" value="NikR_C"/>
    <property type="match status" value="1"/>
</dbReference>
<dbReference type="Pfam" id="PF01402">
    <property type="entry name" value="RHH_1"/>
    <property type="match status" value="1"/>
</dbReference>
<dbReference type="SUPFAM" id="SSF55021">
    <property type="entry name" value="ACT-like"/>
    <property type="match status" value="1"/>
</dbReference>
<dbReference type="SUPFAM" id="SSF47598">
    <property type="entry name" value="Ribbon-helix-helix"/>
    <property type="match status" value="1"/>
</dbReference>
<proteinExistence type="inferred from homology"/>
<keyword id="KW-0238">DNA-binding</keyword>
<keyword id="KW-0479">Metal-binding</keyword>
<keyword id="KW-0533">Nickel</keyword>
<keyword id="KW-0804">Transcription</keyword>
<keyword id="KW-0805">Transcription regulation</keyword>
<organism>
    <name type="scientific">Campylobacter concisus (strain 13826)</name>
    <dbReference type="NCBI Taxonomy" id="360104"/>
    <lineage>
        <taxon>Bacteria</taxon>
        <taxon>Pseudomonadati</taxon>
        <taxon>Campylobacterota</taxon>
        <taxon>Epsilonproteobacteria</taxon>
        <taxon>Campylobacterales</taxon>
        <taxon>Campylobacteraceae</taxon>
        <taxon>Campylobacter</taxon>
    </lineage>
</organism>
<reference key="1">
    <citation type="submission" date="2007-10" db="EMBL/GenBank/DDBJ databases">
        <title>Genome sequence of Campylobacter concisus 13826 isolated from human feces.</title>
        <authorList>
            <person name="Fouts D.E."/>
            <person name="Mongodin E.F."/>
            <person name="Puiu D."/>
            <person name="Sebastian Y."/>
            <person name="Miller W.G."/>
            <person name="Mandrell R.E."/>
            <person name="On S."/>
            <person name="Nelson K.E."/>
        </authorList>
    </citation>
    <scope>NUCLEOTIDE SEQUENCE [LARGE SCALE GENOMIC DNA]</scope>
    <source>
        <strain>13826</strain>
    </source>
</reference>
<evidence type="ECO:0000255" key="1">
    <source>
        <dbReference type="HAMAP-Rule" id="MF_00476"/>
    </source>
</evidence>
<feature type="chain" id="PRO_1000014058" description="Putative nickel-responsive regulator">
    <location>
        <begin position="1"/>
        <end position="137"/>
    </location>
</feature>
<feature type="binding site" evidence="1">
    <location>
        <position position="79"/>
    </location>
    <ligand>
        <name>Ni(2+)</name>
        <dbReference type="ChEBI" id="CHEBI:49786"/>
    </ligand>
</feature>
<feature type="binding site" evidence="1">
    <location>
        <position position="90"/>
    </location>
    <ligand>
        <name>Ni(2+)</name>
        <dbReference type="ChEBI" id="CHEBI:49786"/>
    </ligand>
</feature>
<feature type="binding site" evidence="1">
    <location>
        <position position="92"/>
    </location>
    <ligand>
        <name>Ni(2+)</name>
        <dbReference type="ChEBI" id="CHEBI:49786"/>
    </ligand>
</feature>
<feature type="binding site" evidence="1">
    <location>
        <position position="98"/>
    </location>
    <ligand>
        <name>Ni(2+)</name>
        <dbReference type="ChEBI" id="CHEBI:49786"/>
    </ligand>
</feature>
<accession>A7ZDN6</accession>
<sequence>MDSVIRFSVSLPSQLLDELDRKVSEQGYASRSEFTRDLIREKIVNDSWKDADEELIGVLTLIYVHHHNDLVNKKMDIEHDSDVKIICTNHVHVDHHNCLETISIRGEASKIERFADRIAGLKGVKFSKLTKAAVPKF</sequence>